<gene>
    <name evidence="1" type="primary">thiE</name>
    <name type="ordered locus">BVU_3541</name>
</gene>
<keyword id="KW-0460">Magnesium</keyword>
<keyword id="KW-0479">Metal-binding</keyword>
<keyword id="KW-0784">Thiamine biosynthesis</keyword>
<keyword id="KW-0808">Transferase</keyword>
<organism>
    <name type="scientific">Phocaeicola vulgatus (strain ATCC 8482 / DSM 1447 / JCM 5826 / CCUG 4940 / NBRC 14291 / NCTC 11154)</name>
    <name type="common">Bacteroides vulgatus</name>
    <dbReference type="NCBI Taxonomy" id="435590"/>
    <lineage>
        <taxon>Bacteria</taxon>
        <taxon>Pseudomonadati</taxon>
        <taxon>Bacteroidota</taxon>
        <taxon>Bacteroidia</taxon>
        <taxon>Bacteroidales</taxon>
        <taxon>Bacteroidaceae</taxon>
        <taxon>Phocaeicola</taxon>
    </lineage>
</organism>
<protein>
    <recommendedName>
        <fullName evidence="1">Thiamine-phosphate synthase</fullName>
        <shortName evidence="1">TP synthase</shortName>
        <shortName evidence="1">TPS</shortName>
        <ecNumber evidence="1">2.5.1.3</ecNumber>
    </recommendedName>
    <alternativeName>
        <fullName evidence="1">Thiamine-phosphate pyrophosphorylase</fullName>
        <shortName evidence="1">TMP pyrophosphorylase</shortName>
        <shortName evidence="1">TMP-PPase</shortName>
    </alternativeName>
</protein>
<comment type="function">
    <text evidence="1">Condenses 4-methyl-5-(beta-hydroxyethyl)thiazole monophosphate (THZ-P) and 2-methyl-4-amino-5-hydroxymethyl pyrimidine pyrophosphate (HMP-PP) to form thiamine monophosphate (TMP).</text>
</comment>
<comment type="catalytic activity">
    <reaction evidence="1">
        <text>2-[(2R,5Z)-2-carboxy-4-methylthiazol-5(2H)-ylidene]ethyl phosphate + 4-amino-2-methyl-5-(diphosphooxymethyl)pyrimidine + 2 H(+) = thiamine phosphate + CO2 + diphosphate</text>
        <dbReference type="Rhea" id="RHEA:47844"/>
        <dbReference type="ChEBI" id="CHEBI:15378"/>
        <dbReference type="ChEBI" id="CHEBI:16526"/>
        <dbReference type="ChEBI" id="CHEBI:33019"/>
        <dbReference type="ChEBI" id="CHEBI:37575"/>
        <dbReference type="ChEBI" id="CHEBI:57841"/>
        <dbReference type="ChEBI" id="CHEBI:62899"/>
        <dbReference type="EC" id="2.5.1.3"/>
    </reaction>
</comment>
<comment type="catalytic activity">
    <reaction evidence="1">
        <text>2-(2-carboxy-4-methylthiazol-5-yl)ethyl phosphate + 4-amino-2-methyl-5-(diphosphooxymethyl)pyrimidine + 2 H(+) = thiamine phosphate + CO2 + diphosphate</text>
        <dbReference type="Rhea" id="RHEA:47848"/>
        <dbReference type="ChEBI" id="CHEBI:15378"/>
        <dbReference type="ChEBI" id="CHEBI:16526"/>
        <dbReference type="ChEBI" id="CHEBI:33019"/>
        <dbReference type="ChEBI" id="CHEBI:37575"/>
        <dbReference type="ChEBI" id="CHEBI:57841"/>
        <dbReference type="ChEBI" id="CHEBI:62890"/>
        <dbReference type="EC" id="2.5.1.3"/>
    </reaction>
</comment>
<comment type="catalytic activity">
    <reaction evidence="1">
        <text>4-methyl-5-(2-phosphooxyethyl)-thiazole + 4-amino-2-methyl-5-(diphosphooxymethyl)pyrimidine + H(+) = thiamine phosphate + diphosphate</text>
        <dbReference type="Rhea" id="RHEA:22328"/>
        <dbReference type="ChEBI" id="CHEBI:15378"/>
        <dbReference type="ChEBI" id="CHEBI:33019"/>
        <dbReference type="ChEBI" id="CHEBI:37575"/>
        <dbReference type="ChEBI" id="CHEBI:57841"/>
        <dbReference type="ChEBI" id="CHEBI:58296"/>
        <dbReference type="EC" id="2.5.1.3"/>
    </reaction>
</comment>
<comment type="cofactor">
    <cofactor evidence="1">
        <name>Mg(2+)</name>
        <dbReference type="ChEBI" id="CHEBI:18420"/>
    </cofactor>
    <text evidence="1">Binds 1 Mg(2+) ion per subunit.</text>
</comment>
<comment type="pathway">
    <text evidence="1">Cofactor biosynthesis; thiamine diphosphate biosynthesis; thiamine phosphate from 4-amino-2-methyl-5-diphosphomethylpyrimidine and 4-methyl-5-(2-phosphoethyl)-thiazole: step 1/1.</text>
</comment>
<comment type="similarity">
    <text evidence="1">Belongs to the thiamine-phosphate synthase family.</text>
</comment>
<reference key="1">
    <citation type="journal article" date="2007" name="PLoS Biol.">
        <title>Evolution of symbiotic bacteria in the distal human intestine.</title>
        <authorList>
            <person name="Xu J."/>
            <person name="Mahowald M.A."/>
            <person name="Ley R.E."/>
            <person name="Lozupone C.A."/>
            <person name="Hamady M."/>
            <person name="Martens E.C."/>
            <person name="Henrissat B."/>
            <person name="Coutinho P.M."/>
            <person name="Minx P."/>
            <person name="Latreille P."/>
            <person name="Cordum H."/>
            <person name="Van Brunt A."/>
            <person name="Kim K."/>
            <person name="Fulton R.S."/>
            <person name="Fulton L.A."/>
            <person name="Clifton S.W."/>
            <person name="Wilson R.K."/>
            <person name="Knight R.D."/>
            <person name="Gordon J.I."/>
        </authorList>
    </citation>
    <scope>NUCLEOTIDE SEQUENCE [LARGE SCALE GENOMIC DNA]</scope>
    <source>
        <strain>ATCC 8482 / DSM 1447 / JCM 5826 / CCUG 4940 / NBRC 14291 / NCTC 11154</strain>
    </source>
</reference>
<sequence length="208" mass="23064">MEDKTVELQFITHFTDTYSYYDSARMALEGGCRWIQLRMKDTPVDEVEREAIRLQGLCKDYGATFVIDDHVELVKKIHADGVHLGKKDMPVAEARGILGKEFIIGGTANTFDDVKMHYKAGADYIGCGPFRFTTTKKDLSPVLGLEGYRSIILQMKEANIHLPIVAIGGITLEDIPSIMETGITGIALSGTILRAKDPVAETKRIMNL</sequence>
<accession>A6L645</accession>
<dbReference type="EC" id="2.5.1.3" evidence="1"/>
<dbReference type="EMBL" id="CP000139">
    <property type="protein sequence ID" value="ABR41159.1"/>
    <property type="molecule type" value="Genomic_DNA"/>
</dbReference>
<dbReference type="RefSeq" id="WP_012055758.1">
    <property type="nucleotide sequence ID" value="NZ_CAXUIZ010000032.1"/>
</dbReference>
<dbReference type="SMR" id="A6L645"/>
<dbReference type="STRING" id="435590.BVU_3541"/>
<dbReference type="PaxDb" id="435590-BVU_3541"/>
<dbReference type="GeneID" id="5304501"/>
<dbReference type="KEGG" id="bvu:BVU_3541"/>
<dbReference type="eggNOG" id="COG0352">
    <property type="taxonomic scope" value="Bacteria"/>
</dbReference>
<dbReference type="HOGENOM" id="CLU_018272_3_2_10"/>
<dbReference type="BioCyc" id="BVUL435590:G1G59-3673-MONOMER"/>
<dbReference type="UniPathway" id="UPA00060">
    <property type="reaction ID" value="UER00141"/>
</dbReference>
<dbReference type="Proteomes" id="UP000002861">
    <property type="component" value="Chromosome"/>
</dbReference>
<dbReference type="GO" id="GO:0005737">
    <property type="term" value="C:cytoplasm"/>
    <property type="evidence" value="ECO:0007669"/>
    <property type="project" value="TreeGrafter"/>
</dbReference>
<dbReference type="GO" id="GO:0000287">
    <property type="term" value="F:magnesium ion binding"/>
    <property type="evidence" value="ECO:0007669"/>
    <property type="project" value="UniProtKB-UniRule"/>
</dbReference>
<dbReference type="GO" id="GO:0004789">
    <property type="term" value="F:thiamine-phosphate diphosphorylase activity"/>
    <property type="evidence" value="ECO:0007669"/>
    <property type="project" value="UniProtKB-UniRule"/>
</dbReference>
<dbReference type="GO" id="GO:0009228">
    <property type="term" value="P:thiamine biosynthetic process"/>
    <property type="evidence" value="ECO:0007669"/>
    <property type="project" value="UniProtKB-KW"/>
</dbReference>
<dbReference type="GO" id="GO:0009229">
    <property type="term" value="P:thiamine diphosphate biosynthetic process"/>
    <property type="evidence" value="ECO:0007669"/>
    <property type="project" value="UniProtKB-UniRule"/>
</dbReference>
<dbReference type="CDD" id="cd00564">
    <property type="entry name" value="TMP_TenI"/>
    <property type="match status" value="1"/>
</dbReference>
<dbReference type="Gene3D" id="3.20.20.70">
    <property type="entry name" value="Aldolase class I"/>
    <property type="match status" value="1"/>
</dbReference>
<dbReference type="HAMAP" id="MF_00097">
    <property type="entry name" value="TMP_synthase"/>
    <property type="match status" value="1"/>
</dbReference>
<dbReference type="InterPro" id="IPR013785">
    <property type="entry name" value="Aldolase_TIM"/>
</dbReference>
<dbReference type="InterPro" id="IPR036206">
    <property type="entry name" value="ThiamineP_synth_sf"/>
</dbReference>
<dbReference type="InterPro" id="IPR022998">
    <property type="entry name" value="ThiamineP_synth_TenI"/>
</dbReference>
<dbReference type="InterPro" id="IPR034291">
    <property type="entry name" value="TMP_synthase"/>
</dbReference>
<dbReference type="NCBIfam" id="NF000736">
    <property type="entry name" value="PRK00043.2-3"/>
    <property type="match status" value="1"/>
</dbReference>
<dbReference type="NCBIfam" id="TIGR00693">
    <property type="entry name" value="thiE"/>
    <property type="match status" value="1"/>
</dbReference>
<dbReference type="PANTHER" id="PTHR20857">
    <property type="entry name" value="THIAMINE-PHOSPHATE PYROPHOSPHORYLASE"/>
    <property type="match status" value="1"/>
</dbReference>
<dbReference type="PANTHER" id="PTHR20857:SF15">
    <property type="entry name" value="THIAMINE-PHOSPHATE SYNTHASE"/>
    <property type="match status" value="1"/>
</dbReference>
<dbReference type="Pfam" id="PF02581">
    <property type="entry name" value="TMP-TENI"/>
    <property type="match status" value="1"/>
</dbReference>
<dbReference type="SUPFAM" id="SSF51391">
    <property type="entry name" value="Thiamin phosphate synthase"/>
    <property type="match status" value="1"/>
</dbReference>
<proteinExistence type="inferred from homology"/>
<name>THIE_PHOV8</name>
<feature type="chain" id="PRO_0000336376" description="Thiamine-phosphate synthase">
    <location>
        <begin position="1"/>
        <end position="208"/>
    </location>
</feature>
<feature type="binding site" evidence="1">
    <location>
        <begin position="36"/>
        <end position="40"/>
    </location>
    <ligand>
        <name>4-amino-2-methyl-5-(diphosphooxymethyl)pyrimidine</name>
        <dbReference type="ChEBI" id="CHEBI:57841"/>
    </ligand>
</feature>
<feature type="binding site" evidence="1">
    <location>
        <position position="68"/>
    </location>
    <ligand>
        <name>4-amino-2-methyl-5-(diphosphooxymethyl)pyrimidine</name>
        <dbReference type="ChEBI" id="CHEBI:57841"/>
    </ligand>
</feature>
<feature type="binding site" evidence="1">
    <location>
        <position position="69"/>
    </location>
    <ligand>
        <name>Mg(2+)</name>
        <dbReference type="ChEBI" id="CHEBI:18420"/>
    </ligand>
</feature>
<feature type="binding site" evidence="1">
    <location>
        <position position="88"/>
    </location>
    <ligand>
        <name>Mg(2+)</name>
        <dbReference type="ChEBI" id="CHEBI:18420"/>
    </ligand>
</feature>
<feature type="binding site" evidence="1">
    <location>
        <position position="107"/>
    </location>
    <ligand>
        <name>4-amino-2-methyl-5-(diphosphooxymethyl)pyrimidine</name>
        <dbReference type="ChEBI" id="CHEBI:57841"/>
    </ligand>
</feature>
<feature type="binding site" evidence="1">
    <location>
        <begin position="133"/>
        <end position="135"/>
    </location>
    <ligand>
        <name>2-[(2R,5Z)-2-carboxy-4-methylthiazol-5(2H)-ylidene]ethyl phosphate</name>
        <dbReference type="ChEBI" id="CHEBI:62899"/>
    </ligand>
</feature>
<feature type="binding site" evidence="1">
    <location>
        <position position="136"/>
    </location>
    <ligand>
        <name>4-amino-2-methyl-5-(diphosphooxymethyl)pyrimidine</name>
        <dbReference type="ChEBI" id="CHEBI:57841"/>
    </ligand>
</feature>
<feature type="binding site" evidence="1">
    <location>
        <position position="169"/>
    </location>
    <ligand>
        <name>2-[(2R,5Z)-2-carboxy-4-methylthiazol-5(2H)-ylidene]ethyl phosphate</name>
        <dbReference type="ChEBI" id="CHEBI:62899"/>
    </ligand>
</feature>
<evidence type="ECO:0000255" key="1">
    <source>
        <dbReference type="HAMAP-Rule" id="MF_00097"/>
    </source>
</evidence>